<gene>
    <name type="ORF">LMJF_05_0060</name>
</gene>
<proteinExistence type="inferred from homology"/>
<comment type="function">
    <text evidence="1">Required for normal vault structure. Vaults are multi-subunit structures that may act as scaffolds for proteins involved in signal transduction. Vaults may also play a role in nucleo-cytoplasmic transport (By similarity).</text>
</comment>
<comment type="subunit">
    <text evidence="1">The vault ribonucleoprotein particle is a huge (400 A x 670 A) cage structure of 12.9 MDa. It consists of a dimer of half-vaults, with each half-vault comprising 39 identical major vault protein (MVP) chains, PARP4 and one or more vault RNAs (vRNAs) (By similarity).</text>
</comment>
<comment type="subcellular location">
    <subcellularLocation>
        <location evidence="1 3">Cytoplasm</location>
    </subcellularLocation>
    <subcellularLocation>
        <location evidence="1">Nucleus</location>
    </subcellularLocation>
</comment>
<organism>
    <name type="scientific">Leishmania major</name>
    <dbReference type="NCBI Taxonomy" id="5664"/>
    <lineage>
        <taxon>Eukaryota</taxon>
        <taxon>Discoba</taxon>
        <taxon>Euglenozoa</taxon>
        <taxon>Kinetoplastea</taxon>
        <taxon>Metakinetoplastina</taxon>
        <taxon>Trypanosomatida</taxon>
        <taxon>Trypanosomatidae</taxon>
        <taxon>Leishmaniinae</taxon>
        <taxon>Leishmania</taxon>
    </lineage>
</organism>
<accession>Q4QJJ7</accession>
<sequence>MSDSVIRIKRYHYIHILDNNTNVTRTISGPVVYTRKEHETCLFDPCPCVSVPPRHYCVVKNPCVRDEAGEVVLESSGQVKLRLGDAEIRFEGEPFPLYPGEELDCRDGKGVQKLQLIPPNTGLHVRCVRDFKDADRLVGAGTEWMVAGPQTYIPRVEVVVVEEVKATVIYPNTALMVQANVNFTDRGGVPRVAGEKWLVRALGAYLQSVEETVLGLIQGTMLSDLKALRLSAVRSFTDVYGKGRRAGEQWQVTLKDAPVHIIDAYEMKVADVAAVSLSAKEYVIIHHPVDDTGHNRFGETLVRRGECTFFLQPGETMPRGVEQVLVVGKEEALLLEAVCEYRDRGEKRQPGSRWMVRGPLEYIPANEVKLLEHRRMMALDKNEGIYVMNTTTGEVRAVIGKPYMLDVNEVLWEKHLPLAVEELLESPNGSIQTSERNPGFVSHREKYRIVRFNVQHNAAVQIYDYRKKQPRIVLGPNLVMLAPHEEFTVLSLSGGTPKVPNSLQSLQLFLGPRFSSDTIVVETSDHARLRLRLSYNWYFDIDRVNPSQRTFSVPDFIGDCCKTIASRVRGAVASEDFDSFHRNSAKIIRTAVFGVDETGETKKNLRFTANDFVVTNIDVQSSEPTDEKTRDSLQKSVQLAIEITTKSQEAAARHGNELKDQEAKGQLERQKLLDKIEVENARTKWLELQAKSEAVQASGQSVAEAKARAEALLIEVRSEMQQAEMRARAYRISAEAELQKLQQRQALELEYTQRQNEIDVSKARAAAEAEAEKVKRMVDCIGRDTLVAIARAGPETQVKLLSSLGLKGYLITDGNSPVNLFGTAQGMIGEPKK</sequence>
<name>MVP_LEIMA</name>
<reference evidence="4" key="1">
    <citation type="journal article" date="2005" name="Science">
        <title>The genome of the kinetoplastid parasite, Leishmania major.</title>
        <authorList>
            <person name="Ivens A.C."/>
            <person name="Peacock C.S."/>
            <person name="Worthey E.A."/>
            <person name="Murphy L."/>
            <person name="Aggarwal G."/>
            <person name="Berriman M."/>
            <person name="Sisk E."/>
            <person name="Rajandream M.A."/>
            <person name="Adlem E."/>
            <person name="Aert R."/>
            <person name="Anupama A."/>
            <person name="Apostolou Z."/>
            <person name="Attipoe P."/>
            <person name="Bason N."/>
            <person name="Bauser C."/>
            <person name="Beck A."/>
            <person name="Beverley S.M."/>
            <person name="Bianchettin G."/>
            <person name="Borzym K."/>
            <person name="Bothe G."/>
            <person name="Bruschi C.V."/>
            <person name="Collins M."/>
            <person name="Cadag E."/>
            <person name="Ciarloni L."/>
            <person name="Clayton C."/>
            <person name="Coulson R.M.R."/>
            <person name="Cronin A."/>
            <person name="Cruz A.K."/>
            <person name="Davies R.M."/>
            <person name="De Gaudenzi J."/>
            <person name="Dobson D.E."/>
            <person name="Duesterhoeft A."/>
            <person name="Fazelina G."/>
            <person name="Fosker N."/>
            <person name="Frasch A.C."/>
            <person name="Fraser A."/>
            <person name="Fuchs M."/>
            <person name="Gabel C."/>
            <person name="Goble A."/>
            <person name="Goffeau A."/>
            <person name="Harris D."/>
            <person name="Hertz-Fowler C."/>
            <person name="Hilbert H."/>
            <person name="Horn D."/>
            <person name="Huang Y."/>
            <person name="Klages S."/>
            <person name="Knights A."/>
            <person name="Kube M."/>
            <person name="Larke N."/>
            <person name="Litvin L."/>
            <person name="Lord A."/>
            <person name="Louie T."/>
            <person name="Marra M."/>
            <person name="Masuy D."/>
            <person name="Matthews K."/>
            <person name="Michaeli S."/>
            <person name="Mottram J.C."/>
            <person name="Mueller-Auer S."/>
            <person name="Munden H."/>
            <person name="Nelson S."/>
            <person name="Norbertczak H."/>
            <person name="Oliver K."/>
            <person name="O'neil S."/>
            <person name="Pentony M."/>
            <person name="Pohl T.M."/>
            <person name="Price C."/>
            <person name="Purnelle B."/>
            <person name="Quail M.A."/>
            <person name="Rabbinowitsch E."/>
            <person name="Reinhardt R."/>
            <person name="Rieger M."/>
            <person name="Rinta J."/>
            <person name="Robben J."/>
            <person name="Robertson L."/>
            <person name="Ruiz J.C."/>
            <person name="Rutter S."/>
            <person name="Saunders D."/>
            <person name="Schaefer M."/>
            <person name="Schein J."/>
            <person name="Schwartz D.C."/>
            <person name="Seeger K."/>
            <person name="Seyler A."/>
            <person name="Sharp S."/>
            <person name="Shin H."/>
            <person name="Sivam D."/>
            <person name="Squares R."/>
            <person name="Squares S."/>
            <person name="Tosato V."/>
            <person name="Vogt C."/>
            <person name="Volckaert G."/>
            <person name="Wambutt R."/>
            <person name="Warren T."/>
            <person name="Wedler H."/>
            <person name="Woodward J."/>
            <person name="Zhou S."/>
            <person name="Zimmermann W."/>
            <person name="Smith D.F."/>
            <person name="Blackwell J.M."/>
            <person name="Stuart K.D."/>
            <person name="Barrell B.G."/>
            <person name="Myler P.J."/>
        </authorList>
    </citation>
    <scope>NUCLEOTIDE SEQUENCE [LARGE SCALE GENOMIC DNA]</scope>
    <source>
        <strain evidence="4">MHOM/IL/81/Friedlin</strain>
    </source>
</reference>
<keyword id="KW-0963">Cytoplasm</keyword>
<keyword id="KW-0539">Nucleus</keyword>
<keyword id="KW-0597">Phosphoprotein</keyword>
<keyword id="KW-1185">Reference proteome</keyword>
<keyword id="KW-0677">Repeat</keyword>
<keyword id="KW-0687">Ribonucleoprotein</keyword>
<dbReference type="EMBL" id="FR796401">
    <property type="protein sequence ID" value="CAJ01922.1"/>
    <property type="molecule type" value="Genomic_DNA"/>
</dbReference>
<dbReference type="RefSeq" id="XP_001687482.1">
    <property type="nucleotide sequence ID" value="XM_001687430.1"/>
</dbReference>
<dbReference type="SMR" id="Q4QJJ7"/>
<dbReference type="STRING" id="5664.Q4QJJ7"/>
<dbReference type="EnsemblProtists" id="CAJ01922">
    <property type="protein sequence ID" value="CAJ01922"/>
    <property type="gene ID" value="LMJF_05_0060"/>
</dbReference>
<dbReference type="GeneID" id="5648865"/>
<dbReference type="KEGG" id="lma:LMJF_05_0060"/>
<dbReference type="VEuPathDB" id="TriTrypDB:LmjF.05.0060"/>
<dbReference type="VEuPathDB" id="TriTrypDB:LMJFC_050005900"/>
<dbReference type="VEuPathDB" id="TriTrypDB:LMJLV39_050005500"/>
<dbReference type="VEuPathDB" id="TriTrypDB:LMJSD75_050005500"/>
<dbReference type="eggNOG" id="ENOG502QPP0">
    <property type="taxonomic scope" value="Eukaryota"/>
</dbReference>
<dbReference type="HOGENOM" id="CLU_016171_0_0_1"/>
<dbReference type="InParanoid" id="Q4QJJ7"/>
<dbReference type="OMA" id="VTYRAPH"/>
<dbReference type="Proteomes" id="UP000000542">
    <property type="component" value="Chromosome 5"/>
</dbReference>
<dbReference type="GO" id="GO:0005737">
    <property type="term" value="C:cytoplasm"/>
    <property type="evidence" value="ECO:0000266"/>
    <property type="project" value="GeneDB"/>
</dbReference>
<dbReference type="GO" id="GO:0005634">
    <property type="term" value="C:nucleus"/>
    <property type="evidence" value="ECO:0000318"/>
    <property type="project" value="GO_Central"/>
</dbReference>
<dbReference type="GO" id="GO:1990904">
    <property type="term" value="C:ribonucleoprotein complex"/>
    <property type="evidence" value="ECO:0007669"/>
    <property type="project" value="UniProtKB-KW"/>
</dbReference>
<dbReference type="CDD" id="cd08825">
    <property type="entry name" value="MVP_shoulder"/>
    <property type="match status" value="1"/>
</dbReference>
<dbReference type="FunFam" id="2.30.30.620:FF:000002">
    <property type="entry name" value="Major vault protein"/>
    <property type="match status" value="1"/>
</dbReference>
<dbReference type="FunFam" id="2.30.30.560:FF:000002">
    <property type="entry name" value="Major vault protein-alpha"/>
    <property type="match status" value="1"/>
</dbReference>
<dbReference type="FunFam" id="2.30.30.570:FF:000002">
    <property type="entry name" value="Major vault protein-alpha"/>
    <property type="match status" value="1"/>
</dbReference>
<dbReference type="FunFam" id="2.30.30.550:FF:000001">
    <property type="entry name" value="major vault protein-like"/>
    <property type="match status" value="3"/>
</dbReference>
<dbReference type="FunFam" id="2.30.30.560:FF:000001">
    <property type="entry name" value="major vault protein-like"/>
    <property type="match status" value="1"/>
</dbReference>
<dbReference type="FunFam" id="2.30.30.570:FF:000001">
    <property type="entry name" value="major vault protein-like"/>
    <property type="match status" value="1"/>
</dbReference>
<dbReference type="FunFam" id="3.30.479.30:FF:000010">
    <property type="entry name" value="major vault protein-like"/>
    <property type="match status" value="1"/>
</dbReference>
<dbReference type="Gene3D" id="2.30.30.560">
    <property type="match status" value="2"/>
</dbReference>
<dbReference type="Gene3D" id="2.30.30.570">
    <property type="match status" value="2"/>
</dbReference>
<dbReference type="Gene3D" id="2.30.30.620">
    <property type="match status" value="1"/>
</dbReference>
<dbReference type="Gene3D" id="6.10.250.720">
    <property type="match status" value="1"/>
</dbReference>
<dbReference type="Gene3D" id="6.20.380.10">
    <property type="match status" value="1"/>
</dbReference>
<dbReference type="Gene3D" id="3.30.479.30">
    <property type="entry name" value="Band 7 domain"/>
    <property type="match status" value="1"/>
</dbReference>
<dbReference type="Gene3D" id="2.30.30.550">
    <property type="entry name" value="Major Vault Protein repeat"/>
    <property type="match status" value="4"/>
</dbReference>
<dbReference type="InterPro" id="IPR036013">
    <property type="entry name" value="Band_7/SPFH_dom_sf"/>
</dbReference>
<dbReference type="InterPro" id="IPR039059">
    <property type="entry name" value="MVP"/>
</dbReference>
<dbReference type="InterPro" id="IPR041139">
    <property type="entry name" value="MVP_rep_dom"/>
</dbReference>
<dbReference type="InterPro" id="IPR043023">
    <property type="entry name" value="MVP_rep_sf"/>
</dbReference>
<dbReference type="InterPro" id="IPR021870">
    <property type="entry name" value="MVP_shoulder"/>
</dbReference>
<dbReference type="InterPro" id="IPR041134">
    <property type="entry name" value="Vault_2"/>
</dbReference>
<dbReference type="InterPro" id="IPR043179">
    <property type="entry name" value="Vault_2_sf"/>
</dbReference>
<dbReference type="InterPro" id="IPR040989">
    <property type="entry name" value="Vault_3"/>
</dbReference>
<dbReference type="InterPro" id="IPR041136">
    <property type="entry name" value="Vault_4"/>
</dbReference>
<dbReference type="InterPro" id="IPR002499">
    <property type="entry name" value="Vault_N"/>
</dbReference>
<dbReference type="PANTHER" id="PTHR14165">
    <property type="entry name" value="MAJOR VAULT PROTEIN"/>
    <property type="match status" value="1"/>
</dbReference>
<dbReference type="PANTHER" id="PTHR14165:SF3">
    <property type="entry name" value="MAJOR VAULT PROTEIN"/>
    <property type="match status" value="1"/>
</dbReference>
<dbReference type="Pfam" id="PF11978">
    <property type="entry name" value="MVP_shoulder"/>
    <property type="match status" value="1"/>
</dbReference>
<dbReference type="Pfam" id="PF01505">
    <property type="entry name" value="Vault"/>
    <property type="match status" value="4"/>
</dbReference>
<dbReference type="Pfam" id="PF17794">
    <property type="entry name" value="Vault_2"/>
    <property type="match status" value="1"/>
</dbReference>
<dbReference type="Pfam" id="PF17795">
    <property type="entry name" value="Vault_3"/>
    <property type="match status" value="1"/>
</dbReference>
<dbReference type="Pfam" id="PF17796">
    <property type="entry name" value="Vault_4"/>
    <property type="match status" value="1"/>
</dbReference>
<dbReference type="PROSITE" id="PS51224">
    <property type="entry name" value="MVP"/>
    <property type="match status" value="7"/>
</dbReference>
<protein>
    <recommendedName>
        <fullName>Major vault protein</fullName>
    </recommendedName>
</protein>
<feature type="chain" id="PRO_0000414610" description="Major vault protein">
    <location>
        <begin position="1"/>
        <end position="833"/>
    </location>
</feature>
<feature type="repeat" description="MVP 1" evidence="2">
    <location>
        <begin position="54"/>
        <end position="118"/>
    </location>
</feature>
<feature type="repeat" description="MVP 2" evidence="2">
    <location>
        <begin position="119"/>
        <end position="170"/>
    </location>
</feature>
<feature type="repeat" description="MVP 3" evidence="2">
    <location>
        <begin position="171"/>
        <end position="223"/>
    </location>
</feature>
<feature type="repeat" description="MVP 4" evidence="2">
    <location>
        <begin position="224"/>
        <end position="278"/>
    </location>
</feature>
<feature type="repeat" description="MVP 5" evidence="2">
    <location>
        <begin position="280"/>
        <end position="328"/>
    </location>
</feature>
<feature type="repeat" description="MVP 6" evidence="2">
    <location>
        <begin position="329"/>
        <end position="380"/>
    </location>
</feature>
<feature type="repeat" description="MVP 7" evidence="2">
    <location>
        <begin position="381"/>
        <end position="433"/>
    </location>
</feature>
<evidence type="ECO:0000250" key="1">
    <source>
        <dbReference type="UniProtKB" id="Q14764"/>
    </source>
</evidence>
<evidence type="ECO:0000255" key="2"/>
<evidence type="ECO:0000255" key="3">
    <source>
        <dbReference type="PROSITE-ProRule" id="PRU00571"/>
    </source>
</evidence>
<evidence type="ECO:0000312" key="4">
    <source>
        <dbReference type="EMBL" id="CAJ01922.1"/>
    </source>
</evidence>